<sequence length="396" mass="45027">MAETQVRNFNINFGPQHPAAHGVLRLVLELDGEVVERVDPHIGLLHRGTEKLMEAKTYLQAVPYLDRLDYVAPMNQEHAYALAVERLLDIEVPKRGQLIRVLYSEIGRILNHLLNVTTQAMDVGALTPPLWGFEEREKLMVFYERACGARMHAAYFRPGGVHQDLPDQLIEDIGKWIDPFFTTLKNLDDLITPNRIFKQRNVDIGVVKLEDAWAWGFSGVMVRGSGAAWDLRKSQPYECYSEMEFDIPVGKNGDCYDRYLIRMEEMRQSARIMRQCVDLLLGKERVGPVSNTDHKIVPPKRGEMKRSMEALIHHFKLYTEGYHVPAGEVYAAVEAPKGEFGVYLVSDGSNKPYRFKLRAPGFAHLQAMDFLCRGHMLADVSAILGSLDIVFGEVDR</sequence>
<reference key="1">
    <citation type="journal article" date="2005" name="Infect. Immun.">
        <title>Whole-genome analyses of speciation events in pathogenic Brucellae.</title>
        <authorList>
            <person name="Chain P.S."/>
            <person name="Comerci D.J."/>
            <person name="Tolmasky M.E."/>
            <person name="Larimer F.W."/>
            <person name="Malfatti S.A."/>
            <person name="Vergez L.M."/>
            <person name="Aguero F."/>
            <person name="Land M.L."/>
            <person name="Ugalde R.A."/>
            <person name="Garcia E."/>
        </authorList>
    </citation>
    <scope>NUCLEOTIDE SEQUENCE [LARGE SCALE GENOMIC DNA]</scope>
    <source>
        <strain>2308</strain>
    </source>
</reference>
<dbReference type="EC" id="7.1.1.-" evidence="1"/>
<dbReference type="EMBL" id="AM040264">
    <property type="protein sequence ID" value="CAJ10781.1"/>
    <property type="molecule type" value="Genomic_DNA"/>
</dbReference>
<dbReference type="RefSeq" id="WP_002966770.1">
    <property type="nucleotide sequence ID" value="NZ_KN046823.1"/>
</dbReference>
<dbReference type="SMR" id="Q2YNG0"/>
<dbReference type="STRING" id="359391.BAB1_0825"/>
<dbReference type="KEGG" id="bmf:BAB1_0825"/>
<dbReference type="PATRIC" id="fig|359391.11.peg.3135"/>
<dbReference type="HOGENOM" id="CLU_015134_1_1_5"/>
<dbReference type="PhylomeDB" id="Q2YNG0"/>
<dbReference type="Proteomes" id="UP000002719">
    <property type="component" value="Chromosome I"/>
</dbReference>
<dbReference type="GO" id="GO:0005886">
    <property type="term" value="C:plasma membrane"/>
    <property type="evidence" value="ECO:0007669"/>
    <property type="project" value="UniProtKB-SubCell"/>
</dbReference>
<dbReference type="GO" id="GO:0051287">
    <property type="term" value="F:NAD binding"/>
    <property type="evidence" value="ECO:0007669"/>
    <property type="project" value="InterPro"/>
</dbReference>
<dbReference type="GO" id="GO:0050136">
    <property type="term" value="F:NADH:ubiquinone reductase (non-electrogenic) activity"/>
    <property type="evidence" value="ECO:0007669"/>
    <property type="project" value="UniProtKB-UniRule"/>
</dbReference>
<dbReference type="GO" id="GO:0048038">
    <property type="term" value="F:quinone binding"/>
    <property type="evidence" value="ECO:0007669"/>
    <property type="project" value="UniProtKB-KW"/>
</dbReference>
<dbReference type="FunFam" id="1.10.645.10:FF:000005">
    <property type="entry name" value="NADH-quinone oxidoreductase subunit D"/>
    <property type="match status" value="1"/>
</dbReference>
<dbReference type="Gene3D" id="1.10.645.10">
    <property type="entry name" value="Cytochrome-c3 Hydrogenase, chain B"/>
    <property type="match status" value="1"/>
</dbReference>
<dbReference type="HAMAP" id="MF_01358">
    <property type="entry name" value="NDH1_NuoD"/>
    <property type="match status" value="1"/>
</dbReference>
<dbReference type="InterPro" id="IPR001135">
    <property type="entry name" value="NADH_Q_OxRdtase_suD"/>
</dbReference>
<dbReference type="InterPro" id="IPR014029">
    <property type="entry name" value="NADH_UbQ_OxRdtase_49kDa_CS"/>
</dbReference>
<dbReference type="InterPro" id="IPR022885">
    <property type="entry name" value="NDH1_su_D/H"/>
</dbReference>
<dbReference type="InterPro" id="IPR029014">
    <property type="entry name" value="NiFe-Hase_large"/>
</dbReference>
<dbReference type="NCBIfam" id="TIGR01962">
    <property type="entry name" value="NuoD"/>
    <property type="match status" value="1"/>
</dbReference>
<dbReference type="NCBIfam" id="NF004739">
    <property type="entry name" value="PRK06075.1"/>
    <property type="match status" value="1"/>
</dbReference>
<dbReference type="PANTHER" id="PTHR11993:SF10">
    <property type="entry name" value="NADH DEHYDROGENASE [UBIQUINONE] IRON-SULFUR PROTEIN 2, MITOCHONDRIAL"/>
    <property type="match status" value="1"/>
</dbReference>
<dbReference type="PANTHER" id="PTHR11993">
    <property type="entry name" value="NADH-UBIQUINONE OXIDOREDUCTASE 49 KDA SUBUNIT"/>
    <property type="match status" value="1"/>
</dbReference>
<dbReference type="Pfam" id="PF00346">
    <property type="entry name" value="Complex1_49kDa"/>
    <property type="match status" value="1"/>
</dbReference>
<dbReference type="SUPFAM" id="SSF56762">
    <property type="entry name" value="HydB/Nqo4-like"/>
    <property type="match status" value="1"/>
</dbReference>
<dbReference type="PROSITE" id="PS00535">
    <property type="entry name" value="COMPLEX1_49K"/>
    <property type="match status" value="1"/>
</dbReference>
<protein>
    <recommendedName>
        <fullName evidence="1">NADH-quinone oxidoreductase subunit D</fullName>
        <ecNumber evidence="1">7.1.1.-</ecNumber>
    </recommendedName>
    <alternativeName>
        <fullName evidence="1">NADH dehydrogenase I subunit D</fullName>
    </alternativeName>
    <alternativeName>
        <fullName evidence="1">NDH-1 subunit D</fullName>
    </alternativeName>
</protein>
<comment type="function">
    <text evidence="1">NDH-1 shuttles electrons from NADH, via FMN and iron-sulfur (Fe-S) centers, to quinones in the respiratory chain. The immediate electron acceptor for the enzyme in this species is believed to be ubiquinone. Couples the redox reaction to proton translocation (for every two electrons transferred, four hydrogen ions are translocated across the cytoplasmic membrane), and thus conserves the redox energy in a proton gradient.</text>
</comment>
<comment type="catalytic activity">
    <reaction evidence="1">
        <text>a quinone + NADH + 5 H(+)(in) = a quinol + NAD(+) + 4 H(+)(out)</text>
        <dbReference type="Rhea" id="RHEA:57888"/>
        <dbReference type="ChEBI" id="CHEBI:15378"/>
        <dbReference type="ChEBI" id="CHEBI:24646"/>
        <dbReference type="ChEBI" id="CHEBI:57540"/>
        <dbReference type="ChEBI" id="CHEBI:57945"/>
        <dbReference type="ChEBI" id="CHEBI:132124"/>
    </reaction>
</comment>
<comment type="subunit">
    <text evidence="1">NDH-1 is composed of 14 different subunits. Subunits NuoB, C, D, E, F, and G constitute the peripheral sector of the complex.</text>
</comment>
<comment type="subcellular location">
    <subcellularLocation>
        <location evidence="1">Cell inner membrane</location>
        <topology evidence="1">Peripheral membrane protein</topology>
        <orientation evidence="1">Cytoplasmic side</orientation>
    </subcellularLocation>
</comment>
<comment type="similarity">
    <text evidence="1">Belongs to the complex I 49 kDa subunit family.</text>
</comment>
<evidence type="ECO:0000255" key="1">
    <source>
        <dbReference type="HAMAP-Rule" id="MF_01358"/>
    </source>
</evidence>
<gene>
    <name evidence="1" type="primary">nuoD</name>
    <name type="ordered locus">BAB1_0825</name>
</gene>
<name>NUOD_BRUA2</name>
<feature type="chain" id="PRO_0000357783" description="NADH-quinone oxidoreductase subunit D">
    <location>
        <begin position="1"/>
        <end position="396"/>
    </location>
</feature>
<accession>Q2YNG0</accession>
<keyword id="KW-0997">Cell inner membrane</keyword>
<keyword id="KW-1003">Cell membrane</keyword>
<keyword id="KW-0472">Membrane</keyword>
<keyword id="KW-0520">NAD</keyword>
<keyword id="KW-0874">Quinone</keyword>
<keyword id="KW-1185">Reference proteome</keyword>
<keyword id="KW-1278">Translocase</keyword>
<keyword id="KW-0813">Transport</keyword>
<keyword id="KW-0830">Ubiquinone</keyword>
<proteinExistence type="inferred from homology"/>
<organism>
    <name type="scientific">Brucella abortus (strain 2308)</name>
    <dbReference type="NCBI Taxonomy" id="359391"/>
    <lineage>
        <taxon>Bacteria</taxon>
        <taxon>Pseudomonadati</taxon>
        <taxon>Pseudomonadota</taxon>
        <taxon>Alphaproteobacteria</taxon>
        <taxon>Hyphomicrobiales</taxon>
        <taxon>Brucellaceae</taxon>
        <taxon>Brucella/Ochrobactrum group</taxon>
        <taxon>Brucella</taxon>
    </lineage>
</organism>